<feature type="chain" id="PRO_0000278043" description="UvrABC system protein A">
    <location>
        <begin position="1"/>
        <end position="953"/>
    </location>
</feature>
<feature type="domain" description="ABC transporter 1" evidence="1">
    <location>
        <begin position="320"/>
        <end position="599"/>
    </location>
</feature>
<feature type="domain" description="ABC transporter 2" evidence="1">
    <location>
        <begin position="619"/>
        <end position="949"/>
    </location>
</feature>
<feature type="zinc finger region" description="C4-type" evidence="1">
    <location>
        <begin position="752"/>
        <end position="778"/>
    </location>
</feature>
<feature type="binding site" evidence="1">
    <location>
        <begin position="33"/>
        <end position="40"/>
    </location>
    <ligand>
        <name>ATP</name>
        <dbReference type="ChEBI" id="CHEBI:30616"/>
    </ligand>
</feature>
<feature type="binding site" evidence="1">
    <location>
        <begin position="652"/>
        <end position="659"/>
    </location>
    <ligand>
        <name>ATP</name>
        <dbReference type="ChEBI" id="CHEBI:30616"/>
    </ligand>
</feature>
<keyword id="KW-0067">ATP-binding</keyword>
<keyword id="KW-0963">Cytoplasm</keyword>
<keyword id="KW-0227">DNA damage</keyword>
<keyword id="KW-0228">DNA excision</keyword>
<keyword id="KW-0234">DNA repair</keyword>
<keyword id="KW-0238">DNA-binding</keyword>
<keyword id="KW-0267">Excision nuclease</keyword>
<keyword id="KW-0479">Metal-binding</keyword>
<keyword id="KW-0547">Nucleotide-binding</keyword>
<keyword id="KW-0677">Repeat</keyword>
<keyword id="KW-0742">SOS response</keyword>
<keyword id="KW-0862">Zinc</keyword>
<keyword id="KW-0863">Zinc-finger</keyword>
<sequence>MNEEYIKVRGAKEHNLKNINVDIPRNKFVVITGLSGSGKSSLAFDTIYAEGQRRYVESLSSYARQFLHLQNKPNVESISGLSPAIAIDQKTTSKNPRSTVGTITEIYDYLRLLYARVGIPYSPVTGLPIHSQTVAEMVDIINELPKGTKVYLLAPIVRGHKGEFRREIINLKKQGFQKLIVNGEVCEIDDLPKLDKNKKHNIEVIVDRIVLDENLGNRLADSLESSLNLADGITYLEIVELPQAVKSQFKKNQRITFSEKYSCPVSGFHLTEIEPRIFSFNSPFGACPKCEGIGKEFFFDRDLIVQDQRISIKDGAIVPWGSTSSKFILETLKALADHYKFSIEVPFISLSQNVKDILFEGSGEEEIKFEFHDGSKTQIIKQPFAGIIPSLQEKDRTIESVLIKEELAKFKSEHKCTACSGFRLKDEALCVKIANLHIGEVAGMSIAALQKWFSHLEEKLNQKQLFIAKRILKEINERLKFLMNVGLDYLTLSREAGTLSGGESQRIRLASQIGSGLSGVLYVLDEPSIGLHQRDNTRLIATLKRLRDLGNTVLVVEHDEETMYEADHIIDIGPGAGIHGGRVIAEGNAEKIKHFEESITGRYLSGRQTIKVPSETRVGHDNRAIELLGAVSNNLDNVDIKIPLGTFTAITGVSGSGKSSLMIHTLYKAALKHLEPTSKVFPGKYRELKGLEYIDKIIDINQSPIGRTPRSNPATYTGAFTHIRDWFVELPESKARGYKVGRFSFNVKGGRCEACQGDGLIKIEMHFLPDVYVKCDICNGHRYNRETLEIKYKGKSIADILMMTVEDAMQFFDKIPLIYEKLITLNEVGLGYIKIGQSATTLSGGEAQRVKLAKELSRRSTGKTLYILDEPTTGLHIDDIKKLLKVLHKLVDMGNTVLVIEHNLDVIKTADYIIDVGPEGGDKGGKIVVCGTPADIAACKESHTGRYLKQYLV</sequence>
<organism>
    <name type="scientific">Rickettsia typhi (strain ATCC VR-144 / Wilmington)</name>
    <dbReference type="NCBI Taxonomy" id="257363"/>
    <lineage>
        <taxon>Bacteria</taxon>
        <taxon>Pseudomonadati</taxon>
        <taxon>Pseudomonadota</taxon>
        <taxon>Alphaproteobacteria</taxon>
        <taxon>Rickettsiales</taxon>
        <taxon>Rickettsiaceae</taxon>
        <taxon>Rickettsieae</taxon>
        <taxon>Rickettsia</taxon>
        <taxon>typhus group</taxon>
    </lineage>
</organism>
<accession>Q68Y12</accession>
<comment type="function">
    <text evidence="1">The UvrABC repair system catalyzes the recognition and processing of DNA lesions. UvrA is an ATPase and a DNA-binding protein. A damage recognition complex composed of 2 UvrA and 2 UvrB subunits scans DNA for abnormalities. When the presence of a lesion has been verified by UvrB, the UvrA molecules dissociate.</text>
</comment>
<comment type="subunit">
    <text evidence="1">Forms a heterotetramer with UvrB during the search for lesions.</text>
</comment>
<comment type="subcellular location">
    <subcellularLocation>
        <location evidence="1">Cytoplasm</location>
    </subcellularLocation>
</comment>
<comment type="similarity">
    <text evidence="1">Belongs to the ABC transporter superfamily. UvrA family.</text>
</comment>
<protein>
    <recommendedName>
        <fullName evidence="1">UvrABC system protein A</fullName>
        <shortName evidence="1">UvrA protein</shortName>
    </recommendedName>
    <alternativeName>
        <fullName evidence="1">Excinuclease ABC subunit A</fullName>
    </alternativeName>
</protein>
<evidence type="ECO:0000255" key="1">
    <source>
        <dbReference type="HAMAP-Rule" id="MF_00205"/>
    </source>
</evidence>
<gene>
    <name evidence="1" type="primary">uvrA</name>
    <name type="ordered locus">RT0823</name>
</gene>
<proteinExistence type="inferred from homology"/>
<name>UVRA_RICTY</name>
<reference key="1">
    <citation type="journal article" date="2004" name="J. Bacteriol.">
        <title>Complete genome sequence of Rickettsia typhi and comparison with sequences of other Rickettsiae.</title>
        <authorList>
            <person name="McLeod M.P."/>
            <person name="Qin X."/>
            <person name="Karpathy S.E."/>
            <person name="Gioia J."/>
            <person name="Highlander S.K."/>
            <person name="Fox G.E."/>
            <person name="McNeill T.Z."/>
            <person name="Jiang H."/>
            <person name="Muzny D."/>
            <person name="Jacob L.S."/>
            <person name="Hawes A.C."/>
            <person name="Sodergren E."/>
            <person name="Gill R."/>
            <person name="Hume J."/>
            <person name="Morgan M."/>
            <person name="Fan G."/>
            <person name="Amin A.G."/>
            <person name="Gibbs R.A."/>
            <person name="Hong C."/>
            <person name="Yu X.-J."/>
            <person name="Walker D.H."/>
            <person name="Weinstock G.M."/>
        </authorList>
    </citation>
    <scope>NUCLEOTIDE SEQUENCE [LARGE SCALE GENOMIC DNA]</scope>
    <source>
        <strain>ATCC VR-144 / Wilmington</strain>
    </source>
</reference>
<dbReference type="EMBL" id="AE017197">
    <property type="protein sequence ID" value="AAU04278.1"/>
    <property type="molecule type" value="Genomic_DNA"/>
</dbReference>
<dbReference type="RefSeq" id="WP_011191252.1">
    <property type="nucleotide sequence ID" value="NC_006142.1"/>
</dbReference>
<dbReference type="SMR" id="Q68Y12"/>
<dbReference type="KEGG" id="rty:RT0823"/>
<dbReference type="eggNOG" id="COG0178">
    <property type="taxonomic scope" value="Bacteria"/>
</dbReference>
<dbReference type="HOGENOM" id="CLU_001370_0_2_5"/>
<dbReference type="OrthoDB" id="9809851at2"/>
<dbReference type="Proteomes" id="UP000000604">
    <property type="component" value="Chromosome"/>
</dbReference>
<dbReference type="GO" id="GO:0005737">
    <property type="term" value="C:cytoplasm"/>
    <property type="evidence" value="ECO:0007669"/>
    <property type="project" value="UniProtKB-SubCell"/>
</dbReference>
<dbReference type="GO" id="GO:0009380">
    <property type="term" value="C:excinuclease repair complex"/>
    <property type="evidence" value="ECO:0007669"/>
    <property type="project" value="InterPro"/>
</dbReference>
<dbReference type="GO" id="GO:0005524">
    <property type="term" value="F:ATP binding"/>
    <property type="evidence" value="ECO:0007669"/>
    <property type="project" value="UniProtKB-UniRule"/>
</dbReference>
<dbReference type="GO" id="GO:0016887">
    <property type="term" value="F:ATP hydrolysis activity"/>
    <property type="evidence" value="ECO:0007669"/>
    <property type="project" value="InterPro"/>
</dbReference>
<dbReference type="GO" id="GO:0003677">
    <property type="term" value="F:DNA binding"/>
    <property type="evidence" value="ECO:0007669"/>
    <property type="project" value="UniProtKB-UniRule"/>
</dbReference>
<dbReference type="GO" id="GO:0009381">
    <property type="term" value="F:excinuclease ABC activity"/>
    <property type="evidence" value="ECO:0007669"/>
    <property type="project" value="UniProtKB-UniRule"/>
</dbReference>
<dbReference type="GO" id="GO:0008270">
    <property type="term" value="F:zinc ion binding"/>
    <property type="evidence" value="ECO:0007669"/>
    <property type="project" value="UniProtKB-UniRule"/>
</dbReference>
<dbReference type="GO" id="GO:0006289">
    <property type="term" value="P:nucleotide-excision repair"/>
    <property type="evidence" value="ECO:0007669"/>
    <property type="project" value="UniProtKB-UniRule"/>
</dbReference>
<dbReference type="GO" id="GO:0009432">
    <property type="term" value="P:SOS response"/>
    <property type="evidence" value="ECO:0007669"/>
    <property type="project" value="UniProtKB-UniRule"/>
</dbReference>
<dbReference type="CDD" id="cd03270">
    <property type="entry name" value="ABC_UvrA_I"/>
    <property type="match status" value="1"/>
</dbReference>
<dbReference type="CDD" id="cd03271">
    <property type="entry name" value="ABC_UvrA_II"/>
    <property type="match status" value="1"/>
</dbReference>
<dbReference type="FunFam" id="1.20.1580.10:FF:000002">
    <property type="entry name" value="UvrABC system protein A"/>
    <property type="match status" value="1"/>
</dbReference>
<dbReference type="Gene3D" id="1.10.8.280">
    <property type="entry name" value="ABC transporter ATPase domain-like"/>
    <property type="match status" value="1"/>
</dbReference>
<dbReference type="Gene3D" id="1.20.1580.10">
    <property type="entry name" value="ABC transporter ATPase like domain"/>
    <property type="match status" value="2"/>
</dbReference>
<dbReference type="Gene3D" id="3.30.1490.20">
    <property type="entry name" value="ATP-grasp fold, A domain"/>
    <property type="match status" value="1"/>
</dbReference>
<dbReference type="Gene3D" id="3.40.50.300">
    <property type="entry name" value="P-loop containing nucleotide triphosphate hydrolases"/>
    <property type="match status" value="2"/>
</dbReference>
<dbReference type="HAMAP" id="MF_00205">
    <property type="entry name" value="UvrA"/>
    <property type="match status" value="1"/>
</dbReference>
<dbReference type="InterPro" id="IPR003439">
    <property type="entry name" value="ABC_transporter-like_ATP-bd"/>
</dbReference>
<dbReference type="InterPro" id="IPR017871">
    <property type="entry name" value="ABC_transporter-like_CS"/>
</dbReference>
<dbReference type="InterPro" id="IPR013815">
    <property type="entry name" value="ATP_grasp_subdomain_1"/>
</dbReference>
<dbReference type="InterPro" id="IPR027417">
    <property type="entry name" value="P-loop_NTPase"/>
</dbReference>
<dbReference type="InterPro" id="IPR004602">
    <property type="entry name" value="UvrA"/>
</dbReference>
<dbReference type="InterPro" id="IPR041552">
    <property type="entry name" value="UvrA_DNA-bd"/>
</dbReference>
<dbReference type="InterPro" id="IPR041102">
    <property type="entry name" value="UvrA_inter"/>
</dbReference>
<dbReference type="NCBIfam" id="NF001503">
    <property type="entry name" value="PRK00349.1"/>
    <property type="match status" value="1"/>
</dbReference>
<dbReference type="NCBIfam" id="TIGR00630">
    <property type="entry name" value="uvra"/>
    <property type="match status" value="1"/>
</dbReference>
<dbReference type="PANTHER" id="PTHR43152">
    <property type="entry name" value="UVRABC SYSTEM PROTEIN A"/>
    <property type="match status" value="1"/>
</dbReference>
<dbReference type="PANTHER" id="PTHR43152:SF3">
    <property type="entry name" value="UVRABC SYSTEM PROTEIN A"/>
    <property type="match status" value="1"/>
</dbReference>
<dbReference type="Pfam" id="PF17755">
    <property type="entry name" value="UvrA_DNA-bind"/>
    <property type="match status" value="1"/>
</dbReference>
<dbReference type="Pfam" id="PF17760">
    <property type="entry name" value="UvrA_inter"/>
    <property type="match status" value="1"/>
</dbReference>
<dbReference type="SUPFAM" id="SSF52540">
    <property type="entry name" value="P-loop containing nucleoside triphosphate hydrolases"/>
    <property type="match status" value="2"/>
</dbReference>
<dbReference type="PROSITE" id="PS00211">
    <property type="entry name" value="ABC_TRANSPORTER_1"/>
    <property type="match status" value="2"/>
</dbReference>
<dbReference type="PROSITE" id="PS50893">
    <property type="entry name" value="ABC_TRANSPORTER_2"/>
    <property type="match status" value="2"/>
</dbReference>